<proteinExistence type="inferred from homology"/>
<gene>
    <name evidence="5" type="primary">ORF4</name>
</gene>
<accession>P0DXV6</accession>
<keyword id="KW-0274">FAD</keyword>
<keyword id="KW-0285">Flavoprotein</keyword>
<keyword id="KW-0325">Glycoprotein</keyword>
<keyword id="KW-0503">Monooxygenase</keyword>
<keyword id="KW-0560">Oxidoreductase</keyword>
<keyword id="KW-0732">Signal</keyword>
<organism>
    <name type="scientific">Pyrenophora dematioidea</name>
    <name type="common">Helminthosporium dematioideum</name>
    <dbReference type="NCBI Taxonomy" id="139229"/>
    <lineage>
        <taxon>Eukaryota</taxon>
        <taxon>Fungi</taxon>
        <taxon>Dikarya</taxon>
        <taxon>Ascomycota</taxon>
        <taxon>Pezizomycotina</taxon>
        <taxon>Dothideomycetes</taxon>
        <taxon>Pleosporomycetidae</taxon>
        <taxon>Pleosporales</taxon>
        <taxon>Pleosporineae</taxon>
        <taxon>Pleosporaceae</taxon>
        <taxon>Pyrenophora</taxon>
    </lineage>
</organism>
<feature type="signal peptide" evidence="2">
    <location>
        <begin position="1"/>
        <end position="17"/>
    </location>
</feature>
<feature type="chain" id="PRO_0000461544" description="FAD-dependent monooxygenase" evidence="2">
    <location>
        <begin position="18"/>
        <end position="546"/>
    </location>
</feature>
<feature type="binding site" evidence="1">
    <location>
        <position position="106"/>
    </location>
    <ligand>
        <name>FAD</name>
        <dbReference type="ChEBI" id="CHEBI:57692"/>
    </ligand>
</feature>
<feature type="glycosylation site" description="N-linked (GlcNAc...) asparagine" evidence="3">
    <location>
        <position position="239"/>
    </location>
</feature>
<feature type="glycosylation site" description="N-linked (GlcNAc...) asparagine" evidence="3">
    <location>
        <position position="343"/>
    </location>
</feature>
<reference key="1">
    <citation type="journal article" date="2021" name="J. Am. Chem. Soc.">
        <title>Targeted genome mining reveals the biosynthetic gene clusters of natural product CYP51 inhibitors.</title>
        <authorList>
            <person name="Liu N."/>
            <person name="Abramyan E.D."/>
            <person name="Cheng W."/>
            <person name="Perlatti B."/>
            <person name="Harvey C.J.B."/>
            <person name="Bills G.F."/>
            <person name="Tang Y."/>
        </authorList>
    </citation>
    <scope>NUCLEOTIDE SEQUENCE [GENOMIC DNA]</scope>
    <scope>FUNCTION</scope>
    <scope>PATHWAY</scope>
    <source>
        <strain>TTI-1096</strain>
    </source>
</reference>
<sequence length="546" mass="61241">MYDVIVVGAGWCGLAAAKTYLQTCPTARLLVVDGDSSIGGTWSKERLYPHLVAEAHYGLFEFSDLPMRREGILPDGRIPSAAVHAYLTEYATKFGLLPRIRLNTWIEDIRQDPTAIGDDKAPYWTLQVAGSSQPLQARKLIIATGLTSEPRMPSFPGREDFEGHVLHSKMMGRADTGKLLNDPSIRHVVVYGGSKSAFDAVYLLLRAGKTVDWVIREGGGGPSIMTPLNILGQPSFRLNNSRVMSLFSPNPFEVAGERSWWQRVMHQRAGTFAQLLVVWFWRVLAYLLQRPWKYDYSVNGKQLKPILGLDSVLWSPATLGVMTHPTLWEDIHSGERVTIRRQNITALGQNKHVVLSNGDRITADMVVCATGWHARHSLFTPDEQLAVGLPSTSSFDPKSQAHWLNLQKAADEEILEEFPLLQNCPIALPPVRCEDDHHLYRFVAPSSGPLAQERLIAYVGFLRTTGAPIVYEAQSLWATAYLTGALHVPALEEREKEVARTNAWIRRRYICGRKVPFALFDFLPYVDMLYRDLGVNSRRKKNAVSE</sequence>
<evidence type="ECO:0000250" key="1">
    <source>
        <dbReference type="UniProtKB" id="Q47PU3"/>
    </source>
</evidence>
<evidence type="ECO:0000255" key="2"/>
<evidence type="ECO:0000255" key="3">
    <source>
        <dbReference type="PROSITE-ProRule" id="PRU00498"/>
    </source>
</evidence>
<evidence type="ECO:0000269" key="4">
    <source>
    </source>
</evidence>
<evidence type="ECO:0000303" key="5">
    <source>
    </source>
</evidence>
<evidence type="ECO:0000305" key="6"/>
<evidence type="ECO:0000305" key="7">
    <source>
    </source>
</evidence>
<name>LAN4_PYRDE</name>
<protein>
    <recommendedName>
        <fullName evidence="5">FAD-dependent monooxygenase</fullName>
        <ecNumber evidence="7">1.-.-.-</ecNumber>
    </recommendedName>
    <alternativeName>
        <fullName evidence="5">Lanomycin biosynthesis cluster protein 4</fullName>
    </alternativeName>
</protein>
<comment type="function">
    <text evidence="4 6">FAD-dependent monooxygenase; part of the gene cluster that mediates the biosynthesis of the tetrahydropyranyl antifungal agent lanomycin that acts as an inhibitor of CYP51 and blocks the ergosterol biosynthesis (PubMed:33857369). The biosynthesis probably begins with the formation of an hexaketide, followed by methionine mediated alkylation of C-2 and C-6, and methylation of the reduced C-3 oxygen, pyran forming reductive ring closure, oxygenation of C-4, beta-keto reduction, enoyl reduction and dehydration of the remaining oxygens, and finally, acylation with glycine to complete the biosynthesis (Probable).</text>
</comment>
<comment type="cofactor">
    <cofactor evidence="6">
        <name>FAD</name>
        <dbReference type="ChEBI" id="CHEBI:57692"/>
    </cofactor>
</comment>
<comment type="pathway">
    <text evidence="7">Antifungal biosynthesis.</text>
</comment>
<comment type="similarity">
    <text evidence="6">Belongs to the FAD-binding monooxygenase family.</text>
</comment>
<dbReference type="EC" id="1.-.-.-" evidence="7"/>
<dbReference type="EMBL" id="MW768702">
    <property type="protein sequence ID" value="QUF61544.1"/>
    <property type="molecule type" value="Genomic_DNA"/>
</dbReference>
<dbReference type="GO" id="GO:0004497">
    <property type="term" value="F:monooxygenase activity"/>
    <property type="evidence" value="ECO:0007669"/>
    <property type="project" value="UniProtKB-KW"/>
</dbReference>
<dbReference type="Gene3D" id="3.50.50.60">
    <property type="entry name" value="FAD/NAD(P)-binding domain"/>
    <property type="match status" value="1"/>
</dbReference>
<dbReference type="InterPro" id="IPR036188">
    <property type="entry name" value="FAD/NAD-bd_sf"/>
</dbReference>
<dbReference type="InterPro" id="IPR050346">
    <property type="entry name" value="FMO-like"/>
</dbReference>
<dbReference type="PANTHER" id="PTHR23023">
    <property type="entry name" value="DIMETHYLANILINE MONOOXYGENASE"/>
    <property type="match status" value="1"/>
</dbReference>
<dbReference type="Pfam" id="PF13738">
    <property type="entry name" value="Pyr_redox_3"/>
    <property type="match status" value="1"/>
</dbReference>
<dbReference type="SUPFAM" id="SSF51905">
    <property type="entry name" value="FAD/NAD(P)-binding domain"/>
    <property type="match status" value="2"/>
</dbReference>